<comment type="function">
    <text evidence="1">Functions as a sorting receptor in the Golgi compartment required for the intracellular sorting and delivery of soluble vacuolar proteins, like carboxypeptidase Y (CPY) and proteinase A. Executes multiple rounds of sorting by cycling between the late Golgi and a prevacuolar endosome-like compartment (By similarity).</text>
</comment>
<comment type="subcellular location">
    <subcellularLocation>
        <location evidence="1">Golgi apparatus</location>
        <location evidence="1">trans-Golgi network membrane</location>
        <topology evidence="1">Multi-pass membrane protein</topology>
    </subcellularLocation>
    <subcellularLocation>
        <location evidence="1">Prevacuolar compartment membrane</location>
        <topology evidence="1">Multi-pass membrane protein</topology>
    </subcellularLocation>
    <text evidence="1">Cycles between the Golgi apparatus and the prevacuolar compartment.</text>
</comment>
<comment type="similarity">
    <text evidence="3">Belongs to the VPS10-related sortilin family.</text>
</comment>
<organism>
    <name type="scientific">Arthroderma benhamiae (strain ATCC MYA-4681 / CBS 112371)</name>
    <name type="common">Trichophyton mentagrophytes</name>
    <dbReference type="NCBI Taxonomy" id="663331"/>
    <lineage>
        <taxon>Eukaryota</taxon>
        <taxon>Fungi</taxon>
        <taxon>Dikarya</taxon>
        <taxon>Ascomycota</taxon>
        <taxon>Pezizomycotina</taxon>
        <taxon>Eurotiomycetes</taxon>
        <taxon>Eurotiomycetidae</taxon>
        <taxon>Onygenales</taxon>
        <taxon>Arthrodermataceae</taxon>
        <taxon>Trichophyton</taxon>
    </lineage>
</organism>
<gene>
    <name type="primary">VPS10</name>
    <name type="ORF">ARB_06613</name>
</gene>
<sequence>MIVRSLLLAGSLLLASVVPASFTLAKSDGPQIKVKEFDKVPTDVHYFEDTDTIILSGKKAELYISTDAAASWNLLEGKSGILYPNKYHTQSAVIYGPNRKHWVTFDAAKTWREFEVPDKLVYGGGFMPFTFHGKDAEKVLISAEECQFMTCRHVTYYTTDGFKTVKRLFEGDMGCFWAVGNPAFGEGEPHLPDKLDDRVFCIWPHATPLDLTRRLVYSDTYFSDRKAVAVEAGGRDIKGVNNMASVKKFLILAASSVGTSEAAIYVSKDAVHWDRADFYGGPKVRGGKFTVLESTNYSIQVNVASRRSRVPIGSLFTSDSTGTSFTMNLDGVNEDKDMITDFEQVSGIQGIFLVNIVENAEEVKKGATREKKLVSRISFDDGRTFKPLKCGDKELHLHSITRPSNIGRTYSSPAPGLVMGIGNTGDKLGTYETGDTFVSNDAGVTWRKALDKAHKYEFGDQGSLLVAVFDEYKDKIFTDEISYSLNHGKDWKKAKLPHRVTALQLTTTPDSTSLQFLLVAEDEKKKFYVMSIDFSDIHERKCEKKDFERWPARLDEKGEPDCLMGHKQFYRRRKADADCFVKEKFKEPLPETEPCQCTKEDFECAAGFLRNKDYECEPHRKVSPPEGKCKNPDDKFMGPSGYRLIPGDDCLKKGGVDLEKEVERTCKDATKAPVSGQISVEKTPFKTKNLNYRYLERSDTSSGDDETVILKTDDGDLFVTRDHGKTWQRGKFKEPISLYIPHKYDNDVIYLLTEGKKAYWSIDRAHTFHSFEGKLPITRTLGTLPLYFHPDHPDWLIWIGGQDCKGKKCTDLAYYSKNRGDEWDLLLRGVGKCMFVGKEGELTADDLIFCSQHEHEDPSKSLRLISSDDMFTKKTSVHFDGKPIVGYAKMSEFIVVATKNGTELSSFTSVDGKTFAHAAFPPNYHIDAEYAYTVLDSSTHSIFLHVTDHPAKMHEFGSILKSNSNGTSYVLSLPNANRNDRDYVDFEKIQVVEGVALANIVINPDEVKAKGQEKKFRSLITHNDGSEWALLSPPKKDVEGKNFDCKVKDKGTDDCALHLHGFTERRENRDSMSSGSAVGLIIGVGNVGSSLTPRAESDTYMSRDAGITWHQIKKGRYQWEFGDQGSIVVVVAEEKPTKVLSYSLDEGETWTDFEFSDKEVTVEDISTVPSDTSRNFILWCRPGSSNEIVAYNVDFSGLKEREKQCVLKKESPEADDYYLWSPKHPMQKDNCLFGHVSMYHRKRPEAKCYNGPKLDRLSGEKKNCQCTRQDYECDYNYERQSDGSCALVKGLKPADPMQICKDDPEAIEYFEPTGYRKLPVSTCEGGHQLDHLVARPCPNKKKEFDEKHPGIGGFGLFFAIFFPVAIATGVGYWAFSKWDGKFGRIRLGESQPESIFSRDSPLISVPVTIVAGTVAVITALPLLFSSLWRSFRGYTRLPGSWWGQRQRPYASRGAFAARRGEYVGVVDDEDELLGAEEFEGDEEEDV</sequence>
<keyword id="KW-0325">Glycoprotein</keyword>
<keyword id="KW-0333">Golgi apparatus</keyword>
<keyword id="KW-0472">Membrane</keyword>
<keyword id="KW-0653">Protein transport</keyword>
<keyword id="KW-0675">Receptor</keyword>
<keyword id="KW-1185">Reference proteome</keyword>
<keyword id="KW-0677">Repeat</keyword>
<keyword id="KW-0732">Signal</keyword>
<keyword id="KW-0812">Transmembrane</keyword>
<keyword id="KW-1133">Transmembrane helix</keyword>
<keyword id="KW-0813">Transport</keyword>
<name>VPS10_ARTBC</name>
<accession>D4AQV3</accession>
<protein>
    <recommendedName>
        <fullName>Vacuolar protein sorting/targeting protein 10</fullName>
    </recommendedName>
    <alternativeName>
        <fullName>Carboxypeptidase Y receptor</fullName>
        <shortName>CPY receptor</shortName>
    </alternativeName>
    <alternativeName>
        <fullName>Sortilin VPS10</fullName>
    </alternativeName>
    <alternativeName>
        <fullName>Vacuolar carboxypeptidase sorting receptor VPS10</fullName>
    </alternativeName>
</protein>
<feature type="signal peptide" evidence="2">
    <location>
        <begin position="1"/>
        <end position="25"/>
    </location>
</feature>
<feature type="chain" id="PRO_0000407499" description="Vacuolar protein sorting/targeting protein 10">
    <location>
        <begin position="26"/>
        <end position="1486"/>
    </location>
</feature>
<feature type="topological domain" description="Lumenal" evidence="2">
    <location>
        <begin position="26"/>
        <end position="1349"/>
    </location>
</feature>
<feature type="transmembrane region" description="Helical" evidence="2">
    <location>
        <begin position="1350"/>
        <end position="1370"/>
    </location>
</feature>
<feature type="topological domain" description="Cytoplasmic" evidence="2">
    <location>
        <begin position="1371"/>
        <end position="1401"/>
    </location>
</feature>
<feature type="transmembrane region" description="Helical" evidence="2">
    <location>
        <begin position="1402"/>
        <end position="1422"/>
    </location>
</feature>
<feature type="topological domain" description="Lumenal" evidence="2">
    <location>
        <begin position="1423"/>
        <end position="1486"/>
    </location>
</feature>
<feature type="repeat" description="BNR 1">
    <location>
        <begin position="377"/>
        <end position="386"/>
    </location>
</feature>
<feature type="repeat" description="BNR 2">
    <location>
        <begin position="437"/>
        <end position="447"/>
    </location>
</feature>
<feature type="repeat" description="BNR 3">
    <location>
        <begin position="483"/>
        <end position="493"/>
    </location>
</feature>
<feature type="repeat" description="BNR 4">
    <location>
        <begin position="718"/>
        <end position="728"/>
    </location>
</feature>
<feature type="repeat" description="BNR 5">
    <location>
        <begin position="1100"/>
        <end position="1110"/>
    </location>
</feature>
<feature type="repeat" description="BNR 6">
    <location>
        <begin position="1142"/>
        <end position="1151"/>
    </location>
</feature>
<feature type="glycosylation site" description="N-linked (GlcNAc...) asparagine" evidence="2">
    <location>
        <position position="296"/>
    </location>
</feature>
<feature type="glycosylation site" description="N-linked (GlcNAc...) asparagine" evidence="2">
    <location>
        <position position="900"/>
    </location>
</feature>
<feature type="glycosylation site" description="N-linked (GlcNAc...) asparagine" evidence="2">
    <location>
        <position position="965"/>
    </location>
</feature>
<reference key="1">
    <citation type="journal article" date="2011" name="Genome Biol.">
        <title>Comparative and functional genomics provide insights into the pathogenicity of dermatophytic fungi.</title>
        <authorList>
            <person name="Burmester A."/>
            <person name="Shelest E."/>
            <person name="Gloeckner G."/>
            <person name="Heddergott C."/>
            <person name="Schindler S."/>
            <person name="Staib P."/>
            <person name="Heidel A."/>
            <person name="Felder M."/>
            <person name="Petzold A."/>
            <person name="Szafranski K."/>
            <person name="Feuermann M."/>
            <person name="Pedruzzi I."/>
            <person name="Priebe S."/>
            <person name="Groth M."/>
            <person name="Winkler R."/>
            <person name="Li W."/>
            <person name="Kniemeyer O."/>
            <person name="Schroeckh V."/>
            <person name="Hertweck C."/>
            <person name="Hube B."/>
            <person name="White T.C."/>
            <person name="Platzer M."/>
            <person name="Guthke R."/>
            <person name="Heitman J."/>
            <person name="Woestemeyer J."/>
            <person name="Zipfel P.F."/>
            <person name="Monod M."/>
            <person name="Brakhage A.A."/>
        </authorList>
    </citation>
    <scope>NUCLEOTIDE SEQUENCE [LARGE SCALE GENOMIC DNA]</scope>
    <source>
        <strain>ATCC MYA-4681 / CBS 112371</strain>
    </source>
</reference>
<dbReference type="EMBL" id="ABSU01000005">
    <property type="protein sequence ID" value="EFE34847.1"/>
    <property type="molecule type" value="Genomic_DNA"/>
</dbReference>
<dbReference type="RefSeq" id="XP_003015487.1">
    <property type="nucleotide sequence ID" value="XM_003015441.1"/>
</dbReference>
<dbReference type="SMR" id="D4AQV3"/>
<dbReference type="STRING" id="663331.D4AQV3"/>
<dbReference type="GlyCosmos" id="D4AQV3">
    <property type="glycosylation" value="3 sites, No reported glycans"/>
</dbReference>
<dbReference type="GeneID" id="9521214"/>
<dbReference type="KEGG" id="abe:ARB_06613"/>
<dbReference type="eggNOG" id="KOG3511">
    <property type="taxonomic scope" value="Eukaryota"/>
</dbReference>
<dbReference type="HOGENOM" id="CLU_000700_0_0_1"/>
<dbReference type="OMA" id="ATMSEFI"/>
<dbReference type="OrthoDB" id="443634at2759"/>
<dbReference type="Proteomes" id="UP000008866">
    <property type="component" value="Unassembled WGS sequence"/>
</dbReference>
<dbReference type="GO" id="GO:0005829">
    <property type="term" value="C:cytosol"/>
    <property type="evidence" value="ECO:0007669"/>
    <property type="project" value="GOC"/>
</dbReference>
<dbReference type="GO" id="GO:0005794">
    <property type="term" value="C:Golgi apparatus"/>
    <property type="evidence" value="ECO:0007669"/>
    <property type="project" value="UniProtKB-SubCell"/>
</dbReference>
<dbReference type="GO" id="GO:0016020">
    <property type="term" value="C:membrane"/>
    <property type="evidence" value="ECO:0007669"/>
    <property type="project" value="UniProtKB-KW"/>
</dbReference>
<dbReference type="GO" id="GO:0006895">
    <property type="term" value="P:Golgi to endosome transport"/>
    <property type="evidence" value="ECO:0007669"/>
    <property type="project" value="TreeGrafter"/>
</dbReference>
<dbReference type="GO" id="GO:0006896">
    <property type="term" value="P:Golgi to vacuole transport"/>
    <property type="evidence" value="ECO:0007669"/>
    <property type="project" value="TreeGrafter"/>
</dbReference>
<dbReference type="GO" id="GO:0006623">
    <property type="term" value="P:protein targeting to vacuole"/>
    <property type="evidence" value="ECO:0007669"/>
    <property type="project" value="TreeGrafter"/>
</dbReference>
<dbReference type="FunFam" id="3.30.60.270:FF:000005">
    <property type="entry name" value="Sortilin"/>
    <property type="match status" value="2"/>
</dbReference>
<dbReference type="FunFam" id="2.10.70.80:FF:000001">
    <property type="entry name" value="Sortilin-related VPS10 domain-containing receptor 1"/>
    <property type="match status" value="1"/>
</dbReference>
<dbReference type="Gene3D" id="2.10.70.80">
    <property type="match status" value="2"/>
</dbReference>
<dbReference type="Gene3D" id="3.30.60.270">
    <property type="match status" value="2"/>
</dbReference>
<dbReference type="Gene3D" id="2.130.10.10">
    <property type="entry name" value="YVTN repeat-like/Quinoprotein amine dehydrogenase"/>
    <property type="match status" value="1"/>
</dbReference>
<dbReference type="InterPro" id="IPR031777">
    <property type="entry name" value="Sortilin_C"/>
</dbReference>
<dbReference type="InterPro" id="IPR031778">
    <property type="entry name" value="Sortilin_N"/>
</dbReference>
<dbReference type="InterPro" id="IPR006581">
    <property type="entry name" value="VPS10"/>
</dbReference>
<dbReference type="InterPro" id="IPR050310">
    <property type="entry name" value="VPS10-sortilin"/>
</dbReference>
<dbReference type="InterPro" id="IPR015943">
    <property type="entry name" value="WD40/YVTN_repeat-like_dom_sf"/>
</dbReference>
<dbReference type="PANTHER" id="PTHR12106">
    <property type="entry name" value="SORTILIN RELATED"/>
    <property type="match status" value="1"/>
</dbReference>
<dbReference type="PANTHER" id="PTHR12106:SF27">
    <property type="entry name" value="SORTILIN-RELATED RECEPTOR"/>
    <property type="match status" value="1"/>
</dbReference>
<dbReference type="Pfam" id="PF15902">
    <property type="entry name" value="Sortilin-Vps10"/>
    <property type="match status" value="2"/>
</dbReference>
<dbReference type="Pfam" id="PF15901">
    <property type="entry name" value="Sortilin_C"/>
    <property type="match status" value="2"/>
</dbReference>
<dbReference type="SMART" id="SM00602">
    <property type="entry name" value="VPS10"/>
    <property type="match status" value="2"/>
</dbReference>
<dbReference type="SUPFAM" id="SSF110296">
    <property type="entry name" value="Oligoxyloglucan reducing end-specific cellobiohydrolase"/>
    <property type="match status" value="2"/>
</dbReference>
<proteinExistence type="inferred from homology"/>
<evidence type="ECO:0000250" key="1"/>
<evidence type="ECO:0000255" key="2"/>
<evidence type="ECO:0000305" key="3"/>